<gene>
    <name type="primary">graR</name>
    <name type="ordered locus">MW0621</name>
</gene>
<proteinExistence type="inferred from homology"/>
<accession>Q7A1L2</accession>
<reference key="1">
    <citation type="journal article" date="2002" name="Lancet">
        <title>Genome and virulence determinants of high virulence community-acquired MRSA.</title>
        <authorList>
            <person name="Baba T."/>
            <person name="Takeuchi F."/>
            <person name="Kuroda M."/>
            <person name="Yuzawa H."/>
            <person name="Aoki K."/>
            <person name="Oguchi A."/>
            <person name="Nagai Y."/>
            <person name="Iwama N."/>
            <person name="Asano K."/>
            <person name="Naimi T."/>
            <person name="Kuroda H."/>
            <person name="Cui L."/>
            <person name="Yamamoto K."/>
            <person name="Hiramatsu K."/>
        </authorList>
    </citation>
    <scope>NUCLEOTIDE SEQUENCE [LARGE SCALE GENOMIC DNA]</scope>
    <source>
        <strain>MW2</strain>
    </source>
</reference>
<reference key="2">
    <citation type="journal article" date="2014" name="Infect. Immun.">
        <title>Site-specific mutation of the sensor kinase GraS in Staphylococcus aureus alters the adaptive response to distinct cationic antimicrobial peptides.</title>
        <authorList>
            <person name="Cheung A.L."/>
            <person name="Bayer A.S."/>
            <person name="Yeaman M.R."/>
            <person name="Xiong Y.Q."/>
            <person name="Waring A.J."/>
            <person name="Memmi G."/>
            <person name="Donegan N."/>
            <person name="Chaili S."/>
            <person name="Yang S.J."/>
        </authorList>
    </citation>
    <scope>FUNCTION</scope>
    <scope>DISRUPTION PHENOTYPE</scope>
</reference>
<reference key="3">
    <citation type="journal article" date="2016" name="Infect. Immun.">
        <title>The GraS Sensor in Staphylococcus aureus Mediates Resistance to Host Defense Peptides Differing in Mechanisms of Action.</title>
        <authorList>
            <person name="Chaili S."/>
            <person name="Cheung A.L."/>
            <person name="Bayer A.S."/>
            <person name="Xiong Y.Q."/>
            <person name="Waring A.J."/>
            <person name="Memmi G."/>
            <person name="Donegan N."/>
            <person name="Yang S.J."/>
            <person name="Yeaman M.R."/>
        </authorList>
    </citation>
    <scope>FUNCTION</scope>
    <scope>DISRUPTION PHENOTYPE</scope>
</reference>
<feature type="chain" id="PRO_0000347903" description="Response regulator protein GraR">
    <location>
        <begin position="1"/>
        <end position="224"/>
    </location>
</feature>
<feature type="domain" description="Response regulatory" evidence="4">
    <location>
        <begin position="2"/>
        <end position="115"/>
    </location>
</feature>
<feature type="DNA-binding region" description="OmpR/PhoB-type" evidence="5">
    <location>
        <begin position="126"/>
        <end position="224"/>
    </location>
</feature>
<feature type="modified residue" description="4-aspartylphosphate" evidence="4">
    <location>
        <position position="51"/>
    </location>
</feature>
<feature type="modified residue" description="Phosphothreonine" evidence="3">
    <location>
        <position position="128"/>
    </location>
</feature>
<feature type="modified residue" description="Phosphothreonine" evidence="3">
    <location>
        <position position="130"/>
    </location>
</feature>
<feature type="modified residue" description="Phosphothreonine" evidence="3">
    <location>
        <position position="149"/>
    </location>
</feature>
<protein>
    <recommendedName>
        <fullName>Response regulator protein GraR</fullName>
    </recommendedName>
    <alternativeName>
        <fullName>Glycopeptide resistance-associated protein R</fullName>
    </alternativeName>
</protein>
<name>GRAR_STAAW</name>
<organism>
    <name type="scientific">Staphylococcus aureus (strain MW2)</name>
    <dbReference type="NCBI Taxonomy" id="196620"/>
    <lineage>
        <taxon>Bacteria</taxon>
        <taxon>Bacillati</taxon>
        <taxon>Bacillota</taxon>
        <taxon>Bacilli</taxon>
        <taxon>Bacillales</taxon>
        <taxon>Staphylococcaceae</taxon>
        <taxon>Staphylococcus</taxon>
    </lineage>
</organism>
<evidence type="ECO:0000250" key="1"/>
<evidence type="ECO:0000250" key="2">
    <source>
        <dbReference type="UniProtKB" id="Q2G0D9"/>
    </source>
</evidence>
<evidence type="ECO:0000250" key="3">
    <source>
        <dbReference type="UniProtKB" id="Q2G0E0"/>
    </source>
</evidence>
<evidence type="ECO:0000255" key="4">
    <source>
        <dbReference type="PROSITE-ProRule" id="PRU00169"/>
    </source>
</evidence>
<evidence type="ECO:0000255" key="5">
    <source>
        <dbReference type="PROSITE-ProRule" id="PRU01091"/>
    </source>
</evidence>
<evidence type="ECO:0000269" key="6">
    <source>
    </source>
</evidence>
<evidence type="ECO:0000269" key="7">
    <source>
    </source>
</evidence>
<sequence>MQILLVEDDNTLFQELKKELEQWDFNVAGIEDFGKVMDTFESFNPEIVILDVQLPKYDGFYWCRKMREVSNVPILFLSSRDNPMDQVMSMELGADDYMQKPFYTNVLIAKLQAIYRRVYEFTAEEKRTLTWQDAVVDLSKDSIQKGDDTIFLSKTEMIILEILITKKNQIVSRDTIITALWDDEAFVSDNTLTVNVNRLRKKLSEISMDSAIETKVGKGYMAHE</sequence>
<comment type="function">
    <text evidence="3 6 7">Member of the two-component regulatory system GraR/GraS involved in resistance against cationic antimicrobial peptides (CAMPs) (PubMed:25287929, PubMed:26597988). Upon phosphorylation by GraS, functions as a transcription regulator by direct binding to promoter regions of target genes such as adhesins, exoproteins, transporters, toxins, and proteins involved in cell wall synthesis. Down-regulates the expression of many genes involved in RNA and amino acid synthesis or glycolysis (By similarity).</text>
</comment>
<comment type="subunit">
    <text evidence="2">Interacts with GraX.</text>
</comment>
<comment type="subcellular location">
    <subcellularLocation>
        <location evidence="1">Cytoplasm</location>
    </subcellularLocation>
</comment>
<comment type="PTM">
    <text evidence="3">Phosphorylated by GraS. Phosphorylated by Stk1; phosphorylation increases the DNA-binding activity of GraR.</text>
</comment>
<comment type="disruption phenotype">
    <text evidence="6 7">Deletion leads to complete loss of resistance towards host cationic antimicrobial peptides (CAPs).</text>
</comment>
<keyword id="KW-0010">Activator</keyword>
<keyword id="KW-0046">Antibiotic resistance</keyword>
<keyword id="KW-0963">Cytoplasm</keyword>
<keyword id="KW-0238">DNA-binding</keyword>
<keyword id="KW-0597">Phosphoprotein</keyword>
<keyword id="KW-0678">Repressor</keyword>
<keyword id="KW-0804">Transcription</keyword>
<keyword id="KW-0805">Transcription regulation</keyword>
<keyword id="KW-0902">Two-component regulatory system</keyword>
<keyword id="KW-0843">Virulence</keyword>
<dbReference type="EMBL" id="BA000033">
    <property type="protein sequence ID" value="BAB94486.1"/>
    <property type="molecule type" value="Genomic_DNA"/>
</dbReference>
<dbReference type="RefSeq" id="WP_001166500.1">
    <property type="nucleotide sequence ID" value="NC_003923.1"/>
</dbReference>
<dbReference type="SMR" id="Q7A1L2"/>
<dbReference type="KEGG" id="sam:MW0621"/>
<dbReference type="HOGENOM" id="CLU_000445_30_3_9"/>
<dbReference type="GO" id="GO:0005829">
    <property type="term" value="C:cytosol"/>
    <property type="evidence" value="ECO:0007669"/>
    <property type="project" value="TreeGrafter"/>
</dbReference>
<dbReference type="GO" id="GO:0032993">
    <property type="term" value="C:protein-DNA complex"/>
    <property type="evidence" value="ECO:0007669"/>
    <property type="project" value="TreeGrafter"/>
</dbReference>
<dbReference type="GO" id="GO:0000156">
    <property type="term" value="F:phosphorelay response regulator activity"/>
    <property type="evidence" value="ECO:0007669"/>
    <property type="project" value="TreeGrafter"/>
</dbReference>
<dbReference type="GO" id="GO:0000976">
    <property type="term" value="F:transcription cis-regulatory region binding"/>
    <property type="evidence" value="ECO:0007669"/>
    <property type="project" value="TreeGrafter"/>
</dbReference>
<dbReference type="GO" id="GO:0006355">
    <property type="term" value="P:regulation of DNA-templated transcription"/>
    <property type="evidence" value="ECO:0007669"/>
    <property type="project" value="InterPro"/>
</dbReference>
<dbReference type="GO" id="GO:0046677">
    <property type="term" value="P:response to antibiotic"/>
    <property type="evidence" value="ECO:0007669"/>
    <property type="project" value="UniProtKB-KW"/>
</dbReference>
<dbReference type="CDD" id="cd18159">
    <property type="entry name" value="REC_OmpR_NsrR-like"/>
    <property type="match status" value="1"/>
</dbReference>
<dbReference type="CDD" id="cd00383">
    <property type="entry name" value="trans_reg_C"/>
    <property type="match status" value="1"/>
</dbReference>
<dbReference type="FunFam" id="3.40.50.2300:FF:000232">
    <property type="entry name" value="Response regulator GraR"/>
    <property type="match status" value="1"/>
</dbReference>
<dbReference type="FunFam" id="1.10.10.10:FF:000546">
    <property type="entry name" value="Two-component response regulator GraR"/>
    <property type="match status" value="1"/>
</dbReference>
<dbReference type="Gene3D" id="3.40.50.2300">
    <property type="match status" value="1"/>
</dbReference>
<dbReference type="Gene3D" id="1.10.10.10">
    <property type="entry name" value="Winged helix-like DNA-binding domain superfamily/Winged helix DNA-binding domain"/>
    <property type="match status" value="1"/>
</dbReference>
<dbReference type="InterPro" id="IPR011006">
    <property type="entry name" value="CheY-like_superfamily"/>
</dbReference>
<dbReference type="InterPro" id="IPR001867">
    <property type="entry name" value="OmpR/PhoB-type_DNA-bd"/>
</dbReference>
<dbReference type="InterPro" id="IPR016032">
    <property type="entry name" value="Sig_transdc_resp-reg_C-effctor"/>
</dbReference>
<dbReference type="InterPro" id="IPR001789">
    <property type="entry name" value="Sig_transdc_resp-reg_receiver"/>
</dbReference>
<dbReference type="InterPro" id="IPR039420">
    <property type="entry name" value="WalR-like"/>
</dbReference>
<dbReference type="InterPro" id="IPR036388">
    <property type="entry name" value="WH-like_DNA-bd_sf"/>
</dbReference>
<dbReference type="PANTHER" id="PTHR48111">
    <property type="entry name" value="REGULATOR OF RPOS"/>
    <property type="match status" value="1"/>
</dbReference>
<dbReference type="PANTHER" id="PTHR48111:SF27">
    <property type="entry name" value="SENSORY TRANSDUCTION PROTEIN BCER"/>
    <property type="match status" value="1"/>
</dbReference>
<dbReference type="Pfam" id="PF00072">
    <property type="entry name" value="Response_reg"/>
    <property type="match status" value="1"/>
</dbReference>
<dbReference type="Pfam" id="PF00486">
    <property type="entry name" value="Trans_reg_C"/>
    <property type="match status" value="1"/>
</dbReference>
<dbReference type="SMART" id="SM00448">
    <property type="entry name" value="REC"/>
    <property type="match status" value="1"/>
</dbReference>
<dbReference type="SMART" id="SM00862">
    <property type="entry name" value="Trans_reg_C"/>
    <property type="match status" value="1"/>
</dbReference>
<dbReference type="SUPFAM" id="SSF46894">
    <property type="entry name" value="C-terminal effector domain of the bipartite response regulators"/>
    <property type="match status" value="1"/>
</dbReference>
<dbReference type="SUPFAM" id="SSF52172">
    <property type="entry name" value="CheY-like"/>
    <property type="match status" value="1"/>
</dbReference>
<dbReference type="PROSITE" id="PS51755">
    <property type="entry name" value="OMPR_PHOB"/>
    <property type="match status" value="1"/>
</dbReference>
<dbReference type="PROSITE" id="PS50110">
    <property type="entry name" value="RESPONSE_REGULATORY"/>
    <property type="match status" value="1"/>
</dbReference>